<gene>
    <name type="ORF">CG3817</name>
</gene>
<dbReference type="EMBL" id="AE014297">
    <property type="protein sequence ID" value="AAF55114.1"/>
    <property type="molecule type" value="Genomic_DNA"/>
</dbReference>
<dbReference type="EMBL" id="AY060356">
    <property type="protein sequence ID" value="AAL25395.1"/>
    <property type="status" value="ALT_FRAME"/>
    <property type="molecule type" value="mRNA"/>
</dbReference>
<dbReference type="RefSeq" id="NP_650405.2">
    <property type="nucleotide sequence ID" value="NM_142148.4"/>
</dbReference>
<dbReference type="SMR" id="Q9VFE6"/>
<dbReference type="BioGRID" id="66875">
    <property type="interactions" value="9"/>
</dbReference>
<dbReference type="FunCoup" id="Q9VFE6">
    <property type="interactions" value="564"/>
</dbReference>
<dbReference type="IntAct" id="Q9VFE6">
    <property type="interactions" value="47"/>
</dbReference>
<dbReference type="STRING" id="7227.FBpp0082462"/>
<dbReference type="iPTMnet" id="Q9VFE6"/>
<dbReference type="PaxDb" id="7227-FBpp0082462"/>
<dbReference type="DNASU" id="41805"/>
<dbReference type="EnsemblMetazoa" id="FBtr0083003">
    <property type="protein sequence ID" value="FBpp0082462"/>
    <property type="gene ID" value="FBgn0038275"/>
</dbReference>
<dbReference type="GeneID" id="41805"/>
<dbReference type="KEGG" id="dme:Dmel_CG3817"/>
<dbReference type="UCSC" id="CG3817-RA">
    <property type="organism name" value="d. melanogaster"/>
</dbReference>
<dbReference type="AGR" id="FB:FBgn0038275"/>
<dbReference type="FlyBase" id="FBgn0038275">
    <property type="gene designation" value="CG3817"/>
</dbReference>
<dbReference type="VEuPathDB" id="VectorBase:FBgn0038275"/>
<dbReference type="eggNOG" id="KOG2974">
    <property type="taxonomic scope" value="Eukaryota"/>
</dbReference>
<dbReference type="GeneTree" id="ENSGT00390000001960"/>
<dbReference type="HOGENOM" id="CLU_079732_1_0_1"/>
<dbReference type="InParanoid" id="Q9VFE6"/>
<dbReference type="OMA" id="NAGWADC"/>
<dbReference type="OrthoDB" id="20949at2759"/>
<dbReference type="PhylomeDB" id="Q9VFE6"/>
<dbReference type="BioGRID-ORCS" id="41805">
    <property type="hits" value="1 hit in 1 CRISPR screen"/>
</dbReference>
<dbReference type="GenomeRNAi" id="41805"/>
<dbReference type="PRO" id="PR:Q9VFE6"/>
<dbReference type="Proteomes" id="UP000000803">
    <property type="component" value="Chromosome 3R"/>
</dbReference>
<dbReference type="Bgee" id="FBgn0038275">
    <property type="expression patterns" value="Expressed in adult enteroendocrine precursor cell in adult midgut (Drosophila) and 73 other cell types or tissues"/>
</dbReference>
<dbReference type="ExpressionAtlas" id="Q9VFE6">
    <property type="expression patterns" value="baseline and differential"/>
</dbReference>
<dbReference type="GO" id="GO:0030687">
    <property type="term" value="C:preribosome, large subunit precursor"/>
    <property type="evidence" value="ECO:0000318"/>
    <property type="project" value="GO_Central"/>
</dbReference>
<dbReference type="GO" id="GO:0000460">
    <property type="term" value="P:maturation of 5.8S rRNA"/>
    <property type="evidence" value="ECO:0000318"/>
    <property type="project" value="GO_Central"/>
</dbReference>
<dbReference type="GO" id="GO:0000470">
    <property type="term" value="P:maturation of LSU-rRNA"/>
    <property type="evidence" value="ECO:0000318"/>
    <property type="project" value="GO_Central"/>
</dbReference>
<dbReference type="InterPro" id="IPR012459">
    <property type="entry name" value="Rrp15"/>
</dbReference>
<dbReference type="PANTHER" id="PTHR13245">
    <property type="entry name" value="RRP15-LIKE PROTEIN"/>
    <property type="match status" value="1"/>
</dbReference>
<dbReference type="PANTHER" id="PTHR13245:SF14">
    <property type="entry name" value="RRP15-LIKE PROTEIN"/>
    <property type="match status" value="1"/>
</dbReference>
<dbReference type="Pfam" id="PF07890">
    <property type="entry name" value="Rrp15p"/>
    <property type="match status" value="1"/>
</dbReference>
<organism>
    <name type="scientific">Drosophila melanogaster</name>
    <name type="common">Fruit fly</name>
    <dbReference type="NCBI Taxonomy" id="7227"/>
    <lineage>
        <taxon>Eukaryota</taxon>
        <taxon>Metazoa</taxon>
        <taxon>Ecdysozoa</taxon>
        <taxon>Arthropoda</taxon>
        <taxon>Hexapoda</taxon>
        <taxon>Insecta</taxon>
        <taxon>Pterygota</taxon>
        <taxon>Neoptera</taxon>
        <taxon>Endopterygota</taxon>
        <taxon>Diptera</taxon>
        <taxon>Brachycera</taxon>
        <taxon>Muscomorpha</taxon>
        <taxon>Ephydroidea</taxon>
        <taxon>Drosophilidae</taxon>
        <taxon>Drosophila</taxon>
        <taxon>Sophophora</taxon>
    </lineage>
</organism>
<comment type="similarity">
    <text evidence="3">Belongs to the RRP15 family.</text>
</comment>
<comment type="sequence caution" evidence="3">
    <conflict type="frameshift">
        <sequence resource="EMBL-CDS" id="AAL25395"/>
    </conflict>
</comment>
<evidence type="ECO:0000256" key="1">
    <source>
        <dbReference type="SAM" id="MobiDB-lite"/>
    </source>
</evidence>
<evidence type="ECO:0000269" key="2">
    <source>
    </source>
</evidence>
<evidence type="ECO:0000305" key="3"/>
<name>RRP15_DROME</name>
<keyword id="KW-0597">Phosphoprotein</keyword>
<keyword id="KW-1185">Reference proteome</keyword>
<feature type="chain" id="PRO_0000273219" description="RRP15-like protein">
    <location>
        <begin position="1"/>
        <end position="276"/>
    </location>
</feature>
<feature type="region of interest" description="Disordered" evidence="1">
    <location>
        <begin position="1"/>
        <end position="132"/>
    </location>
</feature>
<feature type="region of interest" description="Disordered" evidence="1">
    <location>
        <begin position="201"/>
        <end position="276"/>
    </location>
</feature>
<feature type="compositionally biased region" description="Basic and acidic residues" evidence="1">
    <location>
        <begin position="75"/>
        <end position="95"/>
    </location>
</feature>
<feature type="compositionally biased region" description="Basic and acidic residues" evidence="1">
    <location>
        <begin position="226"/>
        <end position="245"/>
    </location>
</feature>
<feature type="compositionally biased region" description="Acidic residues" evidence="1">
    <location>
        <begin position="254"/>
        <end position="276"/>
    </location>
</feature>
<feature type="modified residue" description="Phosphoserine" evidence="2">
    <location>
        <position position="269"/>
    </location>
</feature>
<feature type="modified residue" description="Phosphotyrosine" evidence="2">
    <location>
        <position position="271"/>
    </location>
</feature>
<reference key="1">
    <citation type="journal article" date="2000" name="Science">
        <title>The genome sequence of Drosophila melanogaster.</title>
        <authorList>
            <person name="Adams M.D."/>
            <person name="Celniker S.E."/>
            <person name="Holt R.A."/>
            <person name="Evans C.A."/>
            <person name="Gocayne J.D."/>
            <person name="Amanatides P.G."/>
            <person name="Scherer S.E."/>
            <person name="Li P.W."/>
            <person name="Hoskins R.A."/>
            <person name="Galle R.F."/>
            <person name="George R.A."/>
            <person name="Lewis S.E."/>
            <person name="Richards S."/>
            <person name="Ashburner M."/>
            <person name="Henderson S.N."/>
            <person name="Sutton G.G."/>
            <person name="Wortman J.R."/>
            <person name="Yandell M.D."/>
            <person name="Zhang Q."/>
            <person name="Chen L.X."/>
            <person name="Brandon R.C."/>
            <person name="Rogers Y.-H.C."/>
            <person name="Blazej R.G."/>
            <person name="Champe M."/>
            <person name="Pfeiffer B.D."/>
            <person name="Wan K.H."/>
            <person name="Doyle C."/>
            <person name="Baxter E.G."/>
            <person name="Helt G."/>
            <person name="Nelson C.R."/>
            <person name="Miklos G.L.G."/>
            <person name="Abril J.F."/>
            <person name="Agbayani A."/>
            <person name="An H.-J."/>
            <person name="Andrews-Pfannkoch C."/>
            <person name="Baldwin D."/>
            <person name="Ballew R.M."/>
            <person name="Basu A."/>
            <person name="Baxendale J."/>
            <person name="Bayraktaroglu L."/>
            <person name="Beasley E.M."/>
            <person name="Beeson K.Y."/>
            <person name="Benos P.V."/>
            <person name="Berman B.P."/>
            <person name="Bhandari D."/>
            <person name="Bolshakov S."/>
            <person name="Borkova D."/>
            <person name="Botchan M.R."/>
            <person name="Bouck J."/>
            <person name="Brokstein P."/>
            <person name="Brottier P."/>
            <person name="Burtis K.C."/>
            <person name="Busam D.A."/>
            <person name="Butler H."/>
            <person name="Cadieu E."/>
            <person name="Center A."/>
            <person name="Chandra I."/>
            <person name="Cherry J.M."/>
            <person name="Cawley S."/>
            <person name="Dahlke C."/>
            <person name="Davenport L.B."/>
            <person name="Davies P."/>
            <person name="de Pablos B."/>
            <person name="Delcher A."/>
            <person name="Deng Z."/>
            <person name="Mays A.D."/>
            <person name="Dew I."/>
            <person name="Dietz S.M."/>
            <person name="Dodson K."/>
            <person name="Doup L.E."/>
            <person name="Downes M."/>
            <person name="Dugan-Rocha S."/>
            <person name="Dunkov B.C."/>
            <person name="Dunn P."/>
            <person name="Durbin K.J."/>
            <person name="Evangelista C.C."/>
            <person name="Ferraz C."/>
            <person name="Ferriera S."/>
            <person name="Fleischmann W."/>
            <person name="Fosler C."/>
            <person name="Gabrielian A.E."/>
            <person name="Garg N.S."/>
            <person name="Gelbart W.M."/>
            <person name="Glasser K."/>
            <person name="Glodek A."/>
            <person name="Gong F."/>
            <person name="Gorrell J.H."/>
            <person name="Gu Z."/>
            <person name="Guan P."/>
            <person name="Harris M."/>
            <person name="Harris N.L."/>
            <person name="Harvey D.A."/>
            <person name="Heiman T.J."/>
            <person name="Hernandez J.R."/>
            <person name="Houck J."/>
            <person name="Hostin D."/>
            <person name="Houston K.A."/>
            <person name="Howland T.J."/>
            <person name="Wei M.-H."/>
            <person name="Ibegwam C."/>
            <person name="Jalali M."/>
            <person name="Kalush F."/>
            <person name="Karpen G.H."/>
            <person name="Ke Z."/>
            <person name="Kennison J.A."/>
            <person name="Ketchum K.A."/>
            <person name="Kimmel B.E."/>
            <person name="Kodira C.D."/>
            <person name="Kraft C.L."/>
            <person name="Kravitz S."/>
            <person name="Kulp D."/>
            <person name="Lai Z."/>
            <person name="Lasko P."/>
            <person name="Lei Y."/>
            <person name="Levitsky A.A."/>
            <person name="Li J.H."/>
            <person name="Li Z."/>
            <person name="Liang Y."/>
            <person name="Lin X."/>
            <person name="Liu X."/>
            <person name="Mattei B."/>
            <person name="McIntosh T.C."/>
            <person name="McLeod M.P."/>
            <person name="McPherson D."/>
            <person name="Merkulov G."/>
            <person name="Milshina N.V."/>
            <person name="Mobarry C."/>
            <person name="Morris J."/>
            <person name="Moshrefi A."/>
            <person name="Mount S.M."/>
            <person name="Moy M."/>
            <person name="Murphy B."/>
            <person name="Murphy L."/>
            <person name="Muzny D.M."/>
            <person name="Nelson D.L."/>
            <person name="Nelson D.R."/>
            <person name="Nelson K.A."/>
            <person name="Nixon K."/>
            <person name="Nusskern D.R."/>
            <person name="Pacleb J.M."/>
            <person name="Palazzolo M."/>
            <person name="Pittman G.S."/>
            <person name="Pan S."/>
            <person name="Pollard J."/>
            <person name="Puri V."/>
            <person name="Reese M.G."/>
            <person name="Reinert K."/>
            <person name="Remington K."/>
            <person name="Saunders R.D.C."/>
            <person name="Scheeler F."/>
            <person name="Shen H."/>
            <person name="Shue B.C."/>
            <person name="Siden-Kiamos I."/>
            <person name="Simpson M."/>
            <person name="Skupski M.P."/>
            <person name="Smith T.J."/>
            <person name="Spier E."/>
            <person name="Spradling A.C."/>
            <person name="Stapleton M."/>
            <person name="Strong R."/>
            <person name="Sun E."/>
            <person name="Svirskas R."/>
            <person name="Tector C."/>
            <person name="Turner R."/>
            <person name="Venter E."/>
            <person name="Wang A.H."/>
            <person name="Wang X."/>
            <person name="Wang Z.-Y."/>
            <person name="Wassarman D.A."/>
            <person name="Weinstock G.M."/>
            <person name="Weissenbach J."/>
            <person name="Williams S.M."/>
            <person name="Woodage T."/>
            <person name="Worley K.C."/>
            <person name="Wu D."/>
            <person name="Yang S."/>
            <person name="Yao Q.A."/>
            <person name="Ye J."/>
            <person name="Yeh R.-F."/>
            <person name="Zaveri J.S."/>
            <person name="Zhan M."/>
            <person name="Zhang G."/>
            <person name="Zhao Q."/>
            <person name="Zheng L."/>
            <person name="Zheng X.H."/>
            <person name="Zhong F.N."/>
            <person name="Zhong W."/>
            <person name="Zhou X."/>
            <person name="Zhu S.C."/>
            <person name="Zhu X."/>
            <person name="Smith H.O."/>
            <person name="Gibbs R.A."/>
            <person name="Myers E.W."/>
            <person name="Rubin G.M."/>
            <person name="Venter J.C."/>
        </authorList>
    </citation>
    <scope>NUCLEOTIDE SEQUENCE [LARGE SCALE GENOMIC DNA]</scope>
    <source>
        <strain>Berkeley</strain>
    </source>
</reference>
<reference key="2">
    <citation type="journal article" date="2002" name="Genome Biol.">
        <title>Annotation of the Drosophila melanogaster euchromatic genome: a systematic review.</title>
        <authorList>
            <person name="Misra S."/>
            <person name="Crosby M.A."/>
            <person name="Mungall C.J."/>
            <person name="Matthews B.B."/>
            <person name="Campbell K.S."/>
            <person name="Hradecky P."/>
            <person name="Huang Y."/>
            <person name="Kaminker J.S."/>
            <person name="Millburn G.H."/>
            <person name="Prochnik S.E."/>
            <person name="Smith C.D."/>
            <person name="Tupy J.L."/>
            <person name="Whitfield E.J."/>
            <person name="Bayraktaroglu L."/>
            <person name="Berman B.P."/>
            <person name="Bettencourt B.R."/>
            <person name="Celniker S.E."/>
            <person name="de Grey A.D.N.J."/>
            <person name="Drysdale R.A."/>
            <person name="Harris N.L."/>
            <person name="Richter J."/>
            <person name="Russo S."/>
            <person name="Schroeder A.J."/>
            <person name="Shu S.Q."/>
            <person name="Stapleton M."/>
            <person name="Yamada C."/>
            <person name="Ashburner M."/>
            <person name="Gelbart W.M."/>
            <person name="Rubin G.M."/>
            <person name="Lewis S.E."/>
        </authorList>
    </citation>
    <scope>GENOME REANNOTATION</scope>
    <source>
        <strain>Berkeley</strain>
    </source>
</reference>
<reference key="3">
    <citation type="journal article" date="2002" name="Genome Biol.">
        <title>A Drosophila full-length cDNA resource.</title>
        <authorList>
            <person name="Stapleton M."/>
            <person name="Carlson J.W."/>
            <person name="Brokstein P."/>
            <person name="Yu C."/>
            <person name="Champe M."/>
            <person name="George R.A."/>
            <person name="Guarin H."/>
            <person name="Kronmiller B."/>
            <person name="Pacleb J.M."/>
            <person name="Park S."/>
            <person name="Wan K.H."/>
            <person name="Rubin G.M."/>
            <person name="Celniker S.E."/>
        </authorList>
    </citation>
    <scope>NUCLEOTIDE SEQUENCE [LARGE SCALE MRNA]</scope>
    <source>
        <strain>Berkeley</strain>
        <tissue>Ovary</tissue>
    </source>
</reference>
<reference key="4">
    <citation type="journal article" date="2008" name="J. Proteome Res.">
        <title>Phosphoproteome analysis of Drosophila melanogaster embryos.</title>
        <authorList>
            <person name="Zhai B."/>
            <person name="Villen J."/>
            <person name="Beausoleil S.A."/>
            <person name="Mintseris J."/>
            <person name="Gygi S.P."/>
        </authorList>
    </citation>
    <scope>PHOSPHORYLATION [LARGE SCALE ANALYSIS] AT SER-269 AND TYR-271</scope>
    <scope>IDENTIFICATION BY MASS SPECTROMETRY</scope>
    <source>
        <tissue>Embryo</tissue>
    </source>
</reference>
<protein>
    <recommendedName>
        <fullName>RRP15-like protein</fullName>
    </recommendedName>
</protein>
<sequence>MALLTEKRVKKTHAPASDSSPEESDSEGSQNSASEAEGNAGWADSIQKVLKTTKPKTQKKTVLARAKKSQAAVRFQKDAANKKPGFDFEIEKADVKEEDEGDNHEDEKPQASALDATLTKQQRKNVPLQLRVKPSFRDMERERTLRKVATRGVVQFFNAVRIQQKDLQQQLEEAGPLDSRQDAVLNNINKRKFLDVLMSGKRAKSTPVDNAVKKEEQETDDDDEDKGSSGKKKSEWSVLREDFMTNKKIKHWDEEDDDEEGHNDEADDSDYDDGEE</sequence>
<accession>Q9VFE6</accession>
<accession>Q95T28</accession>
<proteinExistence type="evidence at protein level"/>